<dbReference type="EC" id="3.4.19.12"/>
<dbReference type="EMBL" id="AF147717">
    <property type="protein sequence ID" value="AAD31528.1"/>
    <property type="molecule type" value="mRNA"/>
</dbReference>
<dbReference type="EMBL" id="AF151828">
    <property type="protein sequence ID" value="AAD34065.1"/>
    <property type="molecule type" value="mRNA"/>
</dbReference>
<dbReference type="EMBL" id="AF157320">
    <property type="protein sequence ID" value="AAF67486.1"/>
    <property type="molecule type" value="mRNA"/>
</dbReference>
<dbReference type="EMBL" id="BT006790">
    <property type="protein sequence ID" value="AAP35436.1"/>
    <property type="molecule type" value="mRNA"/>
</dbReference>
<dbReference type="EMBL" id="AL136370">
    <property type="status" value="NOT_ANNOTATED_CDS"/>
    <property type="molecule type" value="Genomic_DNA"/>
</dbReference>
<dbReference type="EMBL" id="BC015521">
    <property type="protein sequence ID" value="AAH15521.1"/>
    <property type="molecule type" value="mRNA"/>
</dbReference>
<dbReference type="EMBL" id="BC025369">
    <property type="protein sequence ID" value="AAH25369.1"/>
    <property type="molecule type" value="mRNA"/>
</dbReference>
<dbReference type="CCDS" id="CCDS1378.1">
    <molecule id="Q9Y5K5-1"/>
</dbReference>
<dbReference type="CCDS" id="CCDS55668.1">
    <molecule id="Q9Y5K5-3"/>
</dbReference>
<dbReference type="CCDS" id="CCDS55669.1">
    <molecule id="Q9Y5K5-2"/>
</dbReference>
<dbReference type="CCDS" id="CCDS55670.1">
    <molecule id="Q9Y5K5-4"/>
</dbReference>
<dbReference type="RefSeq" id="NP_001186190.1">
    <molecule id="Q9Y5K5-3"/>
    <property type="nucleotide sequence ID" value="NM_001199261.3"/>
</dbReference>
<dbReference type="RefSeq" id="NP_001186191.1">
    <molecule id="Q9Y5K5-4"/>
    <property type="nucleotide sequence ID" value="NM_001199262.3"/>
</dbReference>
<dbReference type="RefSeq" id="NP_001186192.1">
    <molecule id="Q9Y5K5-2"/>
    <property type="nucleotide sequence ID" value="NM_001199263.3"/>
</dbReference>
<dbReference type="RefSeq" id="NP_057068.1">
    <molecule id="Q9Y5K5-1"/>
    <property type="nucleotide sequence ID" value="NM_015984.5"/>
</dbReference>
<dbReference type="PDB" id="3A7S">
    <property type="method" value="X-ray"/>
    <property type="resolution" value="2.20 A"/>
    <property type="chains" value="A=1-228"/>
</dbReference>
<dbReference type="PDB" id="3IHR">
    <property type="method" value="X-ray"/>
    <property type="resolution" value="2.95 A"/>
    <property type="chains" value="A=1-329"/>
</dbReference>
<dbReference type="PDB" id="3RII">
    <property type="method" value="X-ray"/>
    <property type="resolution" value="2.00 A"/>
    <property type="chains" value="A/B=1-228"/>
</dbReference>
<dbReference type="PDB" id="3RIS">
    <property type="method" value="X-ray"/>
    <property type="resolution" value="2.40 A"/>
    <property type="chains" value="A/B/C/D=1-240"/>
</dbReference>
<dbReference type="PDB" id="3TB3">
    <property type="method" value="X-ray"/>
    <property type="resolution" value="2.30 A"/>
    <property type="chains" value="A/B=1-227"/>
</dbReference>
<dbReference type="PDB" id="4UEL">
    <property type="method" value="X-ray"/>
    <property type="resolution" value="2.30 A"/>
    <property type="chains" value="A=1-329"/>
</dbReference>
<dbReference type="PDB" id="4UEM">
    <property type="method" value="X-ray"/>
    <property type="resolution" value="2.82 A"/>
    <property type="chains" value="A=1-329"/>
</dbReference>
<dbReference type="PDB" id="4UF5">
    <property type="method" value="X-ray"/>
    <property type="resolution" value="3.70 A"/>
    <property type="chains" value="A=1-329"/>
</dbReference>
<dbReference type="PDB" id="4UF6">
    <property type="method" value="X-ray"/>
    <property type="resolution" value="3.69 A"/>
    <property type="chains" value="A/D/G/J=1-329"/>
</dbReference>
<dbReference type="PDB" id="4WLP">
    <property type="method" value="X-ray"/>
    <property type="resolution" value="3.10 A"/>
    <property type="chains" value="A=5-322"/>
</dbReference>
<dbReference type="PDBsum" id="3A7S"/>
<dbReference type="PDBsum" id="3IHR"/>
<dbReference type="PDBsum" id="3RII"/>
<dbReference type="PDBsum" id="3RIS"/>
<dbReference type="PDBsum" id="3TB3"/>
<dbReference type="PDBsum" id="4UEL"/>
<dbReference type="PDBsum" id="4UEM"/>
<dbReference type="PDBsum" id="4UF5"/>
<dbReference type="PDBsum" id="4UF6"/>
<dbReference type="PDBsum" id="4WLP"/>
<dbReference type="SMR" id="Q9Y5K5"/>
<dbReference type="BioGRID" id="119509">
    <property type="interactions" value="321"/>
</dbReference>
<dbReference type="ComplexPortal" id="CPX-846">
    <property type="entry name" value="INO80 chromatin remodeling complex"/>
</dbReference>
<dbReference type="DIP" id="DIP-42671N"/>
<dbReference type="FunCoup" id="Q9Y5K5">
    <property type="interactions" value="4583"/>
</dbReference>
<dbReference type="IntAct" id="Q9Y5K5">
    <property type="interactions" value="97"/>
</dbReference>
<dbReference type="MINT" id="Q9Y5K5"/>
<dbReference type="STRING" id="9606.ENSP00000356421"/>
<dbReference type="BindingDB" id="Q9Y5K5"/>
<dbReference type="ChEMBL" id="CHEMBL3407316"/>
<dbReference type="MEROPS" id="C12.005"/>
<dbReference type="iPTMnet" id="Q9Y5K5"/>
<dbReference type="MetOSite" id="Q9Y5K5"/>
<dbReference type="PhosphoSitePlus" id="Q9Y5K5"/>
<dbReference type="SwissPalm" id="Q9Y5K5"/>
<dbReference type="BioMuta" id="UCHL5"/>
<dbReference type="DMDM" id="108936023"/>
<dbReference type="jPOST" id="Q9Y5K5"/>
<dbReference type="MassIVE" id="Q9Y5K5"/>
<dbReference type="PaxDb" id="9606-ENSP00000356425"/>
<dbReference type="PeptideAtlas" id="Q9Y5K5"/>
<dbReference type="ProteomicsDB" id="86430">
    <molecule id="Q9Y5K5-1"/>
</dbReference>
<dbReference type="ProteomicsDB" id="86431">
    <molecule id="Q9Y5K5-2"/>
</dbReference>
<dbReference type="ProteomicsDB" id="86432">
    <molecule id="Q9Y5K5-3"/>
</dbReference>
<dbReference type="ProteomicsDB" id="86433">
    <molecule id="Q9Y5K5-4"/>
</dbReference>
<dbReference type="Pumba" id="Q9Y5K5"/>
<dbReference type="Antibodypedia" id="1573">
    <property type="antibodies" value="333 antibodies from 30 providers"/>
</dbReference>
<dbReference type="DNASU" id="51377"/>
<dbReference type="Ensembl" id="ENST00000367448.5">
    <molecule id="Q9Y5K5-4"/>
    <property type="protein sequence ID" value="ENSP00000356418.1"/>
    <property type="gene ID" value="ENSG00000116750.14"/>
</dbReference>
<dbReference type="Ensembl" id="ENST00000367449.5">
    <molecule id="Q9Y5K5-2"/>
    <property type="protein sequence ID" value="ENSP00000356419.1"/>
    <property type="gene ID" value="ENSG00000116750.14"/>
</dbReference>
<dbReference type="Ensembl" id="ENST00000367454.6">
    <molecule id="Q9Y5K5-3"/>
    <property type="protein sequence ID" value="ENSP00000356424.1"/>
    <property type="gene ID" value="ENSG00000116750.14"/>
</dbReference>
<dbReference type="Ensembl" id="ENST00000367455.8">
    <molecule id="Q9Y5K5-1"/>
    <property type="protein sequence ID" value="ENSP00000356425.3"/>
    <property type="gene ID" value="ENSG00000116750.14"/>
</dbReference>
<dbReference type="GeneID" id="51377"/>
<dbReference type="KEGG" id="hsa:51377"/>
<dbReference type="MANE-Select" id="ENST00000367454.6">
    <molecule id="Q9Y5K5-3"/>
    <property type="protein sequence ID" value="ENSP00000356424.1"/>
    <property type="RefSeq nucleotide sequence ID" value="NM_001199261.3"/>
    <property type="RefSeq protein sequence ID" value="NP_001186190.1"/>
</dbReference>
<dbReference type="UCSC" id="uc001gsm.4">
    <molecule id="Q9Y5K5-1"/>
    <property type="organism name" value="human"/>
</dbReference>
<dbReference type="AGR" id="HGNC:19678"/>
<dbReference type="CTD" id="51377"/>
<dbReference type="DisGeNET" id="51377"/>
<dbReference type="GeneCards" id="UCHL5"/>
<dbReference type="HGNC" id="HGNC:19678">
    <property type="gene designation" value="UCHL5"/>
</dbReference>
<dbReference type="HPA" id="ENSG00000116750">
    <property type="expression patterns" value="Low tissue specificity"/>
</dbReference>
<dbReference type="MIM" id="610667">
    <property type="type" value="gene"/>
</dbReference>
<dbReference type="neXtProt" id="NX_Q9Y5K5"/>
<dbReference type="OpenTargets" id="ENSG00000116750"/>
<dbReference type="PharmGKB" id="PA134916228"/>
<dbReference type="VEuPathDB" id="HostDB:ENSG00000116750"/>
<dbReference type="eggNOG" id="KOG2778">
    <property type="taxonomic scope" value="Eukaryota"/>
</dbReference>
<dbReference type="GeneTree" id="ENSGT00940000155195"/>
<dbReference type="HOGENOM" id="CLU_018316_0_0_1"/>
<dbReference type="InParanoid" id="Q9Y5K5"/>
<dbReference type="OMA" id="YIQYEIQ"/>
<dbReference type="OrthoDB" id="1924260at2759"/>
<dbReference type="PAN-GO" id="Q9Y5K5">
    <property type="GO annotations" value="3 GO annotations based on evolutionary models"/>
</dbReference>
<dbReference type="PhylomeDB" id="Q9Y5K5"/>
<dbReference type="TreeFam" id="TF313976"/>
<dbReference type="BRENDA" id="3.4.19.12">
    <property type="organism ID" value="2681"/>
</dbReference>
<dbReference type="PathwayCommons" id="Q9Y5K5"/>
<dbReference type="Reactome" id="R-HSA-2173788">
    <property type="pathway name" value="Downregulation of TGF-beta receptor signaling"/>
</dbReference>
<dbReference type="Reactome" id="R-HSA-5689603">
    <property type="pathway name" value="UCH proteinases"/>
</dbReference>
<dbReference type="SignaLink" id="Q9Y5K5"/>
<dbReference type="SIGNOR" id="Q9Y5K5"/>
<dbReference type="BioGRID-ORCS" id="51377">
    <property type="hits" value="210 hits in 1183 CRISPR screens"/>
</dbReference>
<dbReference type="ChiTaRS" id="UCHL5">
    <property type="organism name" value="human"/>
</dbReference>
<dbReference type="EvolutionaryTrace" id="Q9Y5K5"/>
<dbReference type="GeneWiki" id="Ubiquitin_carboxyl-terminal_hydrolase_L5"/>
<dbReference type="GenomeRNAi" id="51377"/>
<dbReference type="Pharos" id="Q9Y5K5">
    <property type="development level" value="Tbio"/>
</dbReference>
<dbReference type="PRO" id="PR:Q9Y5K5"/>
<dbReference type="Proteomes" id="UP000005640">
    <property type="component" value="Chromosome 1"/>
</dbReference>
<dbReference type="RNAct" id="Q9Y5K5">
    <property type="molecule type" value="protein"/>
</dbReference>
<dbReference type="Bgee" id="ENSG00000116750">
    <property type="expression patterns" value="Expressed in cortical plate and 190 other cell types or tissues"/>
</dbReference>
<dbReference type="ExpressionAtlas" id="Q9Y5K5">
    <property type="expression patterns" value="baseline and differential"/>
</dbReference>
<dbReference type="GO" id="GO:0005737">
    <property type="term" value="C:cytoplasm"/>
    <property type="evidence" value="ECO:0000318"/>
    <property type="project" value="GO_Central"/>
</dbReference>
<dbReference type="GO" id="GO:0005829">
    <property type="term" value="C:cytosol"/>
    <property type="evidence" value="ECO:0000314"/>
    <property type="project" value="HPA"/>
</dbReference>
<dbReference type="GO" id="GO:0031011">
    <property type="term" value="C:Ino80 complex"/>
    <property type="evidence" value="ECO:0000314"/>
    <property type="project" value="UniProtKB"/>
</dbReference>
<dbReference type="GO" id="GO:0005730">
    <property type="term" value="C:nucleolus"/>
    <property type="evidence" value="ECO:0000314"/>
    <property type="project" value="HPA"/>
</dbReference>
<dbReference type="GO" id="GO:0005654">
    <property type="term" value="C:nucleoplasm"/>
    <property type="evidence" value="ECO:0000314"/>
    <property type="project" value="HPA"/>
</dbReference>
<dbReference type="GO" id="GO:0005634">
    <property type="term" value="C:nucleus"/>
    <property type="evidence" value="ECO:0000314"/>
    <property type="project" value="UniProtKB"/>
</dbReference>
<dbReference type="GO" id="GO:0000502">
    <property type="term" value="C:proteasome complex"/>
    <property type="evidence" value="ECO:0007669"/>
    <property type="project" value="UniProtKB-KW"/>
</dbReference>
<dbReference type="GO" id="GO:0004843">
    <property type="term" value="F:cysteine-type deubiquitinase activity"/>
    <property type="evidence" value="ECO:0000314"/>
    <property type="project" value="UniProtKB"/>
</dbReference>
<dbReference type="GO" id="GO:0004866">
    <property type="term" value="F:endopeptidase inhibitor activity"/>
    <property type="evidence" value="ECO:0000315"/>
    <property type="project" value="UniProtKB"/>
</dbReference>
<dbReference type="GO" id="GO:0070628">
    <property type="term" value="F:proteasome binding"/>
    <property type="evidence" value="ECO:0000314"/>
    <property type="project" value="UniProtKB"/>
</dbReference>
<dbReference type="GO" id="GO:0003723">
    <property type="term" value="F:RNA binding"/>
    <property type="evidence" value="ECO:0007005"/>
    <property type="project" value="UniProtKB"/>
</dbReference>
<dbReference type="GO" id="GO:0006338">
    <property type="term" value="P:chromatin remodeling"/>
    <property type="evidence" value="ECO:0000314"/>
    <property type="project" value="ComplexPortal"/>
</dbReference>
<dbReference type="GO" id="GO:0006310">
    <property type="term" value="P:DNA recombination"/>
    <property type="evidence" value="ECO:0007669"/>
    <property type="project" value="UniProtKB-KW"/>
</dbReference>
<dbReference type="GO" id="GO:0006281">
    <property type="term" value="P:DNA repair"/>
    <property type="evidence" value="ECO:0007669"/>
    <property type="project" value="UniProtKB-KW"/>
</dbReference>
<dbReference type="GO" id="GO:0048853">
    <property type="term" value="P:forebrain morphogenesis"/>
    <property type="evidence" value="ECO:0007669"/>
    <property type="project" value="Ensembl"/>
</dbReference>
<dbReference type="GO" id="GO:0021670">
    <property type="term" value="P:lateral ventricle development"/>
    <property type="evidence" value="ECO:0007669"/>
    <property type="project" value="Ensembl"/>
</dbReference>
<dbReference type="GO" id="GO:0030901">
    <property type="term" value="P:midbrain development"/>
    <property type="evidence" value="ECO:0007669"/>
    <property type="project" value="Ensembl"/>
</dbReference>
<dbReference type="GO" id="GO:0032435">
    <property type="term" value="P:negative regulation of proteasomal ubiquitin-dependent protein catabolic process"/>
    <property type="evidence" value="ECO:0000315"/>
    <property type="project" value="UniProtKB"/>
</dbReference>
<dbReference type="GO" id="GO:0045739">
    <property type="term" value="P:positive regulation of DNA repair"/>
    <property type="evidence" value="ECO:0000266"/>
    <property type="project" value="ComplexPortal"/>
</dbReference>
<dbReference type="GO" id="GO:0045893">
    <property type="term" value="P:positive regulation of DNA-templated transcription"/>
    <property type="evidence" value="ECO:0000315"/>
    <property type="project" value="ComplexPortal"/>
</dbReference>
<dbReference type="GO" id="GO:0045880">
    <property type="term" value="P:positive regulation of smoothened signaling pathway"/>
    <property type="evidence" value="ECO:0000315"/>
    <property type="project" value="FlyBase"/>
</dbReference>
<dbReference type="GO" id="GO:1904507">
    <property type="term" value="P:positive regulation of telomere maintenance in response to DNA damage"/>
    <property type="evidence" value="ECO:0000266"/>
    <property type="project" value="ComplexPortal"/>
</dbReference>
<dbReference type="GO" id="GO:0016579">
    <property type="term" value="P:protein deubiquitination"/>
    <property type="evidence" value="ECO:0000314"/>
    <property type="project" value="UniProtKB"/>
</dbReference>
<dbReference type="GO" id="GO:0051726">
    <property type="term" value="P:regulation of cell cycle"/>
    <property type="evidence" value="ECO:0000315"/>
    <property type="project" value="ComplexPortal"/>
</dbReference>
<dbReference type="GO" id="GO:0033044">
    <property type="term" value="P:regulation of chromosome organization"/>
    <property type="evidence" value="ECO:0000315"/>
    <property type="project" value="ComplexPortal"/>
</dbReference>
<dbReference type="GO" id="GO:0006282">
    <property type="term" value="P:regulation of DNA repair"/>
    <property type="evidence" value="ECO:0000266"/>
    <property type="project" value="ComplexPortal"/>
</dbReference>
<dbReference type="GO" id="GO:0006275">
    <property type="term" value="P:regulation of DNA replication"/>
    <property type="evidence" value="ECO:0000315"/>
    <property type="project" value="ComplexPortal"/>
</dbReference>
<dbReference type="GO" id="GO:0060382">
    <property type="term" value="P:regulation of DNA strand elongation"/>
    <property type="evidence" value="ECO:0000315"/>
    <property type="project" value="ComplexPortal"/>
</dbReference>
<dbReference type="GO" id="GO:0045995">
    <property type="term" value="P:regulation of embryonic development"/>
    <property type="evidence" value="ECO:0000266"/>
    <property type="project" value="ComplexPortal"/>
</dbReference>
<dbReference type="GO" id="GO:0061136">
    <property type="term" value="P:regulation of proteasomal protein catabolic process"/>
    <property type="evidence" value="ECO:0000315"/>
    <property type="project" value="UniProtKB"/>
</dbReference>
<dbReference type="GO" id="GO:0000723">
    <property type="term" value="P:telomere maintenance"/>
    <property type="evidence" value="ECO:0000266"/>
    <property type="project" value="ComplexPortal"/>
</dbReference>
<dbReference type="GO" id="GO:0006511">
    <property type="term" value="P:ubiquitin-dependent protein catabolic process"/>
    <property type="evidence" value="ECO:0007669"/>
    <property type="project" value="InterPro"/>
</dbReference>
<dbReference type="CDD" id="cd02255">
    <property type="entry name" value="Peptidase_C12"/>
    <property type="match status" value="1"/>
</dbReference>
<dbReference type="FunFam" id="3.40.532.10:FF:000001">
    <property type="entry name" value="Ubiquitin carboxyl-terminal hydrolase"/>
    <property type="match status" value="1"/>
</dbReference>
<dbReference type="FunFam" id="1.20.58.860:FF:000009">
    <property type="entry name" value="Ubiquitin carboxyl-terminal hydrolase isozyme L5"/>
    <property type="match status" value="1"/>
</dbReference>
<dbReference type="Gene3D" id="1.20.58.860">
    <property type="match status" value="1"/>
</dbReference>
<dbReference type="Gene3D" id="3.40.532.10">
    <property type="entry name" value="Peptidase C12, ubiquitin carboxyl-terminal hydrolase"/>
    <property type="match status" value="1"/>
</dbReference>
<dbReference type="InterPro" id="IPR038765">
    <property type="entry name" value="Papain-like_cys_pep_sf"/>
</dbReference>
<dbReference type="InterPro" id="IPR001578">
    <property type="entry name" value="Peptidase_C12_UCH"/>
</dbReference>
<dbReference type="InterPro" id="IPR036959">
    <property type="entry name" value="Peptidase_C12_UCH_sf"/>
</dbReference>
<dbReference type="InterPro" id="IPR017390">
    <property type="entry name" value="Ubiquitinyl_hydrolase_UCH37"/>
</dbReference>
<dbReference type="InterPro" id="IPR033837">
    <property type="entry name" value="UCH37"/>
</dbReference>
<dbReference type="InterPro" id="IPR041507">
    <property type="entry name" value="UCH_C"/>
</dbReference>
<dbReference type="PANTHER" id="PTHR10589">
    <property type="entry name" value="UBIQUITIN CARBOXYL-TERMINAL HYDROLASE"/>
    <property type="match status" value="1"/>
</dbReference>
<dbReference type="PANTHER" id="PTHR10589:SF16">
    <property type="entry name" value="UBIQUITIN CARBOXYL-TERMINAL HYDROLASE ISOZYME L5"/>
    <property type="match status" value="1"/>
</dbReference>
<dbReference type="Pfam" id="PF01088">
    <property type="entry name" value="Peptidase_C12"/>
    <property type="match status" value="1"/>
</dbReference>
<dbReference type="Pfam" id="PF18031">
    <property type="entry name" value="UCH_C"/>
    <property type="match status" value="1"/>
</dbReference>
<dbReference type="PIRSF" id="PIRSF038120">
    <property type="entry name" value="Ubiquitinyl_hydrolase_UCH37"/>
    <property type="match status" value="1"/>
</dbReference>
<dbReference type="PRINTS" id="PR00707">
    <property type="entry name" value="UBCTHYDRLASE"/>
</dbReference>
<dbReference type="SUPFAM" id="SSF54001">
    <property type="entry name" value="Cysteine proteinases"/>
    <property type="match status" value="1"/>
</dbReference>
<dbReference type="PROSITE" id="PS52048">
    <property type="entry name" value="UCH_DOMAIN"/>
    <property type="match status" value="1"/>
</dbReference>
<dbReference type="PROSITE" id="PS52049">
    <property type="entry name" value="ULD"/>
    <property type="match status" value="1"/>
</dbReference>
<name>UCHL5_HUMAN</name>
<comment type="function">
    <text evidence="6 9">Protease that specifically cleaves 'Lys-48'-linked polyubiquitin chains. Deubiquitinating enzyme associated with the 19S regulatory subunit of the 26S proteasome. Putative regulatory component of the INO80 complex; however is inactive in the INO80 complex and is activated by a transient interaction of the INO80 complex with the proteasome via ADRM1.</text>
</comment>
<comment type="catalytic activity">
    <reaction>
        <text>Thiol-dependent hydrolysis of ester, thioester, amide, peptide and isopeptide bonds formed by the C-terminal Gly of ubiquitin (a 76-residue protein attached to proteins as an intracellular targeting signal).</text>
        <dbReference type="EC" id="3.4.19.12"/>
    </reaction>
</comment>
<comment type="activity regulation">
    <text evidence="6 8 9">Activated by ADRM1. Inhibited by interaction with NFRKB.</text>
</comment>
<comment type="subunit">
    <text evidence="6 7 8 9 10">Component of the 19S (PA700) regulatory complex of the 26S proteasome. Interacts with ADRM1 and NFRKB; in vitro ADRM1 and NFRKB compete for interaction with UCHL5. Component of the INO80 complex; specifically part of a complex module associated with N-terminus of INO80.</text>
</comment>
<comment type="interaction">
    <interactant intactId="EBI-1051183">
        <id>Q9Y5K5</id>
    </interactant>
    <interactant intactId="EBI-769597">
        <id>Q9H981</id>
        <label>ACTR8</label>
    </interactant>
    <organismsDiffer>false</organismsDiffer>
    <experiments>4</experiments>
</comment>
<comment type="interaction">
    <interactant intactId="EBI-1051183">
        <id>Q9Y5K5</id>
    </interactant>
    <interactant intactId="EBI-954387">
        <id>Q16186</id>
        <label>ADRM1</label>
    </interactant>
    <organismsDiffer>false</organismsDiffer>
    <experiments>23</experiments>
</comment>
<comment type="interaction">
    <interactant intactId="EBI-1051183">
        <id>Q9Y5K5</id>
    </interactant>
    <interactant intactId="EBI-769401">
        <id>Q8NBZ0</id>
        <label>INO80E</label>
    </interactant>
    <organismsDiffer>false</organismsDiffer>
    <experiments>10</experiments>
</comment>
<comment type="interaction">
    <interactant intactId="EBI-1051183">
        <id>Q9Y5K5</id>
    </interactant>
    <interactant intactId="EBI-2511210">
        <id>Q6P4R8</id>
        <label>NFRKB</label>
    </interactant>
    <organismsDiffer>false</organismsDiffer>
    <experiments>14</experiments>
</comment>
<comment type="interaction">
    <interactant intactId="EBI-1051183">
        <id>Q9Y5K5</id>
    </interactant>
    <interactant intactId="EBI-357793">
        <id>P60900</id>
        <label>PSMA6</label>
    </interactant>
    <organismsDiffer>false</organismsDiffer>
    <experiments>5</experiments>
</comment>
<comment type="interaction">
    <interactant intactId="EBI-1051183">
        <id>Q9Y5K5</id>
    </interactant>
    <interactant intactId="EBI-357648">
        <id>Q13200</id>
        <label>PSMD2</label>
    </interactant>
    <organismsDiffer>false</organismsDiffer>
    <experiments>7</experiments>
</comment>
<comment type="interaction">
    <interactant intactId="EBI-1051183">
        <id>Q9Y5K5</id>
    </interactant>
    <interactant intactId="EBI-359318">
        <id>P55036</id>
        <label>PSMD4</label>
    </interactant>
    <organismsDiffer>false</organismsDiffer>
    <experiments>8</experiments>
</comment>
<comment type="interaction">
    <interactant intactId="EBI-1051183">
        <id>Q9Y5K5</id>
    </interactant>
    <interactant intactId="EBI-1245626">
        <id>P0C1Z6</id>
        <label>TFPT</label>
    </interactant>
    <organismsDiffer>false</organismsDiffer>
    <experiments>6</experiments>
</comment>
<comment type="interaction">
    <interactant intactId="EBI-1051183">
        <id>Q9Y5K5</id>
    </interactant>
    <interactant intactId="EBI-740037">
        <id>O96006</id>
        <label>ZBED1</label>
    </interactant>
    <organismsDiffer>false</organismsDiffer>
    <experiments>3</experiments>
</comment>
<comment type="interaction">
    <interactant intactId="EBI-11749875">
        <id>Q9Y5K5-3</id>
    </interactant>
    <interactant intactId="EBI-954387">
        <id>Q16186</id>
        <label>ADRM1</label>
    </interactant>
    <organismsDiffer>false</organismsDiffer>
    <experiments>5</experiments>
</comment>
<comment type="interaction">
    <interactant intactId="EBI-11749875">
        <id>Q9Y5K5-3</id>
    </interactant>
    <interactant intactId="EBI-2511210">
        <id>Q6P4R8</id>
        <label>NFRKB</label>
    </interactant>
    <organismsDiffer>false</organismsDiffer>
    <experiments>3</experiments>
</comment>
<comment type="subcellular location">
    <subcellularLocation>
        <location evidence="9">Cytoplasm</location>
    </subcellularLocation>
    <subcellularLocation>
        <location evidence="9">Nucleus</location>
    </subcellularLocation>
    <text>Associates with the proteasome 19S subunit in the cytoplasm. Associates with the INO80 complex in the nucleus.</text>
</comment>
<comment type="alternative products">
    <event type="alternative splicing"/>
    <isoform>
        <id>Q9Y5K5-1</id>
        <name>1</name>
        <sequence type="displayed"/>
    </isoform>
    <isoform>
        <id>Q9Y5K5-2</id>
        <name>2</name>
        <sequence type="described" ref="VSP_005253 VSP_005254"/>
    </isoform>
    <isoform>
        <id>Q9Y5K5-3</id>
        <name>3</name>
        <sequence type="described" ref="VSP_005253"/>
    </isoform>
    <isoform>
        <id>Q9Y5K5-4</id>
        <name>4</name>
        <sequence type="described" ref="VSP_005253 VSP_017062"/>
    </isoform>
    <text>Experimental confirmation may be lacking for some isoforms.</text>
</comment>
<comment type="similarity">
    <text evidence="15">Belongs to the peptidase C12 family.</text>
</comment>
<proteinExistence type="evidence at protein level"/>
<accession>Q9Y5K5</accession>
<accession>Q5LJA6</accession>
<accession>Q5LJA7</accession>
<accession>Q8TBS4</accession>
<accession>Q96BJ9</accession>
<accession>Q9H1W5</accession>
<accession>Q9P0I3</accession>
<accession>Q9UQN2</accession>
<organism>
    <name type="scientific">Homo sapiens</name>
    <name type="common">Human</name>
    <dbReference type="NCBI Taxonomy" id="9606"/>
    <lineage>
        <taxon>Eukaryota</taxon>
        <taxon>Metazoa</taxon>
        <taxon>Chordata</taxon>
        <taxon>Craniata</taxon>
        <taxon>Vertebrata</taxon>
        <taxon>Euteleostomi</taxon>
        <taxon>Mammalia</taxon>
        <taxon>Eutheria</taxon>
        <taxon>Euarchontoglires</taxon>
        <taxon>Primates</taxon>
        <taxon>Haplorrhini</taxon>
        <taxon>Catarrhini</taxon>
        <taxon>Hominidae</taxon>
        <taxon>Homo</taxon>
    </lineage>
</organism>
<feature type="chain" id="PRO_0000211066" description="Ubiquitin carboxyl-terminal hydrolase isozyme L5">
    <location>
        <begin position="1"/>
        <end position="329"/>
    </location>
</feature>
<feature type="domain" description="UCH catalytic" evidence="2">
    <location>
        <begin position="7"/>
        <end position="225"/>
    </location>
</feature>
<feature type="domain" description="ULD" evidence="3">
    <location>
        <begin position="291"/>
        <end position="319"/>
    </location>
</feature>
<feature type="region of interest" description="Interaction with ADRM1">
    <location>
        <begin position="313"/>
        <end position="329"/>
    </location>
</feature>
<feature type="active site" description="Nucleophile" evidence="2">
    <location>
        <position position="88"/>
    </location>
</feature>
<feature type="active site" description="Proton donor" evidence="2">
    <location>
        <position position="164"/>
    </location>
</feature>
<feature type="site" description="Transition state stabilizer" evidence="2">
    <location>
        <position position="82"/>
    </location>
</feature>
<feature type="site" description="Important for enzyme activity" evidence="2">
    <location>
        <position position="179"/>
    </location>
</feature>
<feature type="modified residue" description="N6-succinyllysine" evidence="1">
    <location>
        <position position="47"/>
    </location>
</feature>
<feature type="modified residue" description="N6-acetyllysine" evidence="16">
    <location>
        <position position="158"/>
    </location>
</feature>
<feature type="modified residue" description="N6-succinyllysine" evidence="1">
    <location>
        <position position="289"/>
    </location>
</feature>
<feature type="splice variant" id="VSP_005253" description="In isoform 2, isoform 3 and isoform 4." evidence="11 12 13 14">
    <location>
        <position position="246"/>
    </location>
</feature>
<feature type="splice variant" id="VSP_005254" description="In isoform 2." evidence="11 12">
    <original>AKEKQNAKKAQETK</original>
    <variation>GK</variation>
    <location>
        <begin position="316"/>
        <end position="329"/>
    </location>
</feature>
<feature type="splice variant" id="VSP_017062" description="In isoform 4." evidence="13">
    <original>AKEKQNAKKAQETK</original>
    <variation>FEKHFEKTLLGK</variation>
    <location>
        <begin position="316"/>
        <end position="329"/>
    </location>
</feature>
<feature type="sequence variant" id="VAR_011613" evidence="4 5">
    <original>I</original>
    <variation>F</variation>
    <location>
        <position position="197"/>
    </location>
</feature>
<feature type="mutagenesis site" description="Abolishes enzymatic activity." evidence="6">
    <original>C</original>
    <variation>A</variation>
    <location>
        <position position="88"/>
    </location>
</feature>
<feature type="sequence conflict" description="In Ref. 2; AAD34065." evidence="15" ref="2">
    <original>G</original>
    <variation>V</variation>
    <location>
        <position position="6"/>
    </location>
</feature>
<feature type="helix" evidence="17">
    <location>
        <begin position="15"/>
        <end position="24"/>
    </location>
</feature>
<feature type="strand" evidence="17">
    <location>
        <begin position="28"/>
        <end position="34"/>
    </location>
</feature>
<feature type="turn" evidence="17">
    <location>
        <begin position="40"/>
        <end position="46"/>
    </location>
</feature>
<feature type="strand" evidence="17">
    <location>
        <begin position="48"/>
        <end position="56"/>
    </location>
</feature>
<feature type="strand" evidence="17">
    <location>
        <begin position="65"/>
        <end position="68"/>
    </location>
</feature>
<feature type="helix" evidence="17">
    <location>
        <begin position="72"/>
        <end position="75"/>
    </location>
</feature>
<feature type="helix" evidence="17">
    <location>
        <begin position="85"/>
        <end position="87"/>
    </location>
</feature>
<feature type="helix" evidence="17">
    <location>
        <begin position="88"/>
        <end position="98"/>
    </location>
</feature>
<feature type="helix" evidence="17">
    <location>
        <begin position="109"/>
        <end position="118"/>
    </location>
</feature>
<feature type="helix" evidence="17">
    <location>
        <begin position="123"/>
        <end position="131"/>
    </location>
</feature>
<feature type="helix" evidence="17">
    <location>
        <begin position="134"/>
        <end position="142"/>
    </location>
</feature>
<feature type="helix" evidence="17">
    <location>
        <begin position="159"/>
        <end position="162"/>
    </location>
</feature>
<feature type="strand" evidence="17">
    <location>
        <begin position="163"/>
        <end position="171"/>
    </location>
</feature>
<feature type="strand" evidence="17">
    <location>
        <begin position="174"/>
        <end position="178"/>
    </location>
</feature>
<feature type="strand" evidence="17">
    <location>
        <begin position="182"/>
        <end position="184"/>
    </location>
</feature>
<feature type="strand" evidence="17">
    <location>
        <begin position="186"/>
        <end position="190"/>
    </location>
</feature>
<feature type="strand" evidence="17">
    <location>
        <begin position="193"/>
        <end position="195"/>
    </location>
</feature>
<feature type="helix" evidence="17">
    <location>
        <begin position="197"/>
        <end position="213"/>
    </location>
</feature>
<feature type="strand" evidence="17">
    <location>
        <begin position="218"/>
        <end position="225"/>
    </location>
</feature>
<feature type="helix" evidence="18">
    <location>
        <begin position="227"/>
        <end position="244"/>
    </location>
</feature>
<feature type="helix" evidence="18">
    <location>
        <begin position="255"/>
        <end position="289"/>
    </location>
</feature>
<feature type="helix" evidence="18">
    <location>
        <begin position="293"/>
        <end position="305"/>
    </location>
</feature>
<feature type="helix" evidence="18">
    <location>
        <begin position="309"/>
        <end position="318"/>
    </location>
</feature>
<sequence>MTGNAGEWCLMESDPGVFTELIKGFGCRGAQVEEIWSLEPENFEKLKPVHGLIFLFKWQPGEEPAGSVVQDSRLDTIFFAKQVINNACATQAIVSVLLNCTHQDVHLGETLSEFKEFSQSFDAAMKGLALSNSDVIRQVHNSFARQQMFEFDTKTSAKEEDAFHFVSYVPVNGRLYELDGLREGPIDLGACNQDDWISAVRPVIEKRIQKYSEGEIRFNLMAIVSDRKMIYEQKIAELQRQLAEEEPMDTDQGNSMLSAIQSEVAKNQMLIEEEVQKLKRYKIENIRRKHNYLPFIMELLKTLAEHQQLIPLVEKAKEKQNAKKAQETK</sequence>
<protein>
    <recommendedName>
        <fullName>Ubiquitin carboxyl-terminal hydrolase isozyme L5</fullName>
        <shortName>UCH-L5</shortName>
        <ecNumber>3.4.19.12</ecNumber>
    </recommendedName>
    <alternativeName>
        <fullName>Ubiquitin C-terminal hydrolase UCH37</fullName>
    </alternativeName>
    <alternativeName>
        <fullName>Ubiquitin thioesterase L5</fullName>
    </alternativeName>
</protein>
<keyword id="KW-0002">3D-structure</keyword>
<keyword id="KW-0007">Acetylation</keyword>
<keyword id="KW-0025">Alternative splicing</keyword>
<keyword id="KW-0963">Cytoplasm</keyword>
<keyword id="KW-0227">DNA damage</keyword>
<keyword id="KW-0233">DNA recombination</keyword>
<keyword id="KW-0234">DNA repair</keyword>
<keyword id="KW-0378">Hydrolase</keyword>
<keyword id="KW-0539">Nucleus</keyword>
<keyword id="KW-0645">Protease</keyword>
<keyword id="KW-0647">Proteasome</keyword>
<keyword id="KW-1267">Proteomics identification</keyword>
<keyword id="KW-1185">Reference proteome</keyword>
<keyword id="KW-0788">Thiol protease</keyword>
<keyword id="KW-0804">Transcription</keyword>
<keyword id="KW-0805">Transcription regulation</keyword>
<keyword id="KW-0833">Ubl conjugation pathway</keyword>
<reference key="1">
    <citation type="journal article" date="2006" name="Nat. Cell Biol.">
        <title>Proteasome recruitment and activation of the Uch37 deubiquitinating enzyme by Adrm1.</title>
        <authorList>
            <person name="Yao T."/>
            <person name="Song L."/>
            <person name="Xu W."/>
            <person name="DeMartino G.N."/>
            <person name="Florens L."/>
            <person name="Swanson S.K."/>
            <person name="Washburn M.P."/>
            <person name="Conaway R.C."/>
            <person name="Conaway J.W."/>
            <person name="Cohen R.E."/>
        </authorList>
    </citation>
    <scope>NUCLEOTIDE SEQUENCE [MRNA] (ISOFORM 1)</scope>
    <scope>FUNCTION</scope>
    <scope>ACTIVITY REGULATION</scope>
    <scope>MUTAGENESIS OF CYS-88</scope>
    <scope>INTERACTION WITH ADRM1</scope>
</reference>
<reference key="2">
    <citation type="journal article" date="2000" name="Genome Res.">
        <title>Identification of novel human genes evolutionarily conserved in Caenorhabditis elegans by comparative proteomics.</title>
        <authorList>
            <person name="Lai C.-H."/>
            <person name="Chou C.-Y."/>
            <person name="Ch'ang L.-Y."/>
            <person name="Liu C.-S."/>
            <person name="Lin W.-C."/>
        </authorList>
    </citation>
    <scope>NUCLEOTIDE SEQUENCE [LARGE SCALE MRNA] (ISOFORM 2)</scope>
    <scope>VARIANT PHE-197</scope>
</reference>
<reference key="3">
    <citation type="journal article" date="2000" name="Proc. Natl. Acad. Sci. U.S.A.">
        <title>Gene expression profiling in the human hypothalamus-pituitary-adrenal axis and full-length cDNA cloning.</title>
        <authorList>
            <person name="Hu R.-M."/>
            <person name="Han Z.-G."/>
            <person name="Song H.-D."/>
            <person name="Peng Y.-D."/>
            <person name="Huang Q.-H."/>
            <person name="Ren S.-X."/>
            <person name="Gu Y.-J."/>
            <person name="Huang C.-H."/>
            <person name="Li Y.-B."/>
            <person name="Jiang C.-L."/>
            <person name="Fu G."/>
            <person name="Zhang Q.-H."/>
            <person name="Gu B.-W."/>
            <person name="Dai M."/>
            <person name="Mao Y.-F."/>
            <person name="Gao G.-F."/>
            <person name="Rong R."/>
            <person name="Ye M."/>
            <person name="Zhou J."/>
            <person name="Xu S.-H."/>
            <person name="Gu J."/>
            <person name="Shi J.-X."/>
            <person name="Jin W.-R."/>
            <person name="Zhang C.-K."/>
            <person name="Wu T.-M."/>
            <person name="Huang G.-Y."/>
            <person name="Chen Z."/>
            <person name="Chen M.-D."/>
            <person name="Chen J.-L."/>
        </authorList>
    </citation>
    <scope>NUCLEOTIDE SEQUENCE [LARGE SCALE MRNA] (ISOFORM 2)</scope>
    <scope>VARIANT PHE-197</scope>
    <source>
        <tissue>Adrenal gland</tissue>
    </source>
</reference>
<reference key="4">
    <citation type="submission" date="2003-05" db="EMBL/GenBank/DDBJ databases">
        <title>Cloning of human full-length CDSs in BD Creator(TM) system donor vector.</title>
        <authorList>
            <person name="Kalnine N."/>
            <person name="Chen X."/>
            <person name="Rolfs A."/>
            <person name="Halleck A."/>
            <person name="Hines L."/>
            <person name="Eisenstein S."/>
            <person name="Koundinya M."/>
            <person name="Raphael J."/>
            <person name="Moreira D."/>
            <person name="Kelley T."/>
            <person name="LaBaer J."/>
            <person name="Lin Y."/>
            <person name="Phelan M."/>
            <person name="Farmer A."/>
        </authorList>
    </citation>
    <scope>NUCLEOTIDE SEQUENCE [LARGE SCALE MRNA] (ISOFORM 3)</scope>
</reference>
<reference key="5">
    <citation type="journal article" date="2006" name="Nature">
        <title>The DNA sequence and biological annotation of human chromosome 1.</title>
        <authorList>
            <person name="Gregory S.G."/>
            <person name="Barlow K.F."/>
            <person name="McLay K.E."/>
            <person name="Kaul R."/>
            <person name="Swarbreck D."/>
            <person name="Dunham A."/>
            <person name="Scott C.E."/>
            <person name="Howe K.L."/>
            <person name="Woodfine K."/>
            <person name="Spencer C.C.A."/>
            <person name="Jones M.C."/>
            <person name="Gillson C."/>
            <person name="Searle S."/>
            <person name="Zhou Y."/>
            <person name="Kokocinski F."/>
            <person name="McDonald L."/>
            <person name="Evans R."/>
            <person name="Phillips K."/>
            <person name="Atkinson A."/>
            <person name="Cooper R."/>
            <person name="Jones C."/>
            <person name="Hall R.E."/>
            <person name="Andrews T.D."/>
            <person name="Lloyd C."/>
            <person name="Ainscough R."/>
            <person name="Almeida J.P."/>
            <person name="Ambrose K.D."/>
            <person name="Anderson F."/>
            <person name="Andrew R.W."/>
            <person name="Ashwell R.I.S."/>
            <person name="Aubin K."/>
            <person name="Babbage A.K."/>
            <person name="Bagguley C.L."/>
            <person name="Bailey J."/>
            <person name="Beasley H."/>
            <person name="Bethel G."/>
            <person name="Bird C.P."/>
            <person name="Bray-Allen S."/>
            <person name="Brown J.Y."/>
            <person name="Brown A.J."/>
            <person name="Buckley D."/>
            <person name="Burton J."/>
            <person name="Bye J."/>
            <person name="Carder C."/>
            <person name="Chapman J.C."/>
            <person name="Clark S.Y."/>
            <person name="Clarke G."/>
            <person name="Clee C."/>
            <person name="Cobley V."/>
            <person name="Collier R.E."/>
            <person name="Corby N."/>
            <person name="Coville G.J."/>
            <person name="Davies J."/>
            <person name="Deadman R."/>
            <person name="Dunn M."/>
            <person name="Earthrowl M."/>
            <person name="Ellington A.G."/>
            <person name="Errington H."/>
            <person name="Frankish A."/>
            <person name="Frankland J."/>
            <person name="French L."/>
            <person name="Garner P."/>
            <person name="Garnett J."/>
            <person name="Gay L."/>
            <person name="Ghori M.R.J."/>
            <person name="Gibson R."/>
            <person name="Gilby L.M."/>
            <person name="Gillett W."/>
            <person name="Glithero R.J."/>
            <person name="Grafham D.V."/>
            <person name="Griffiths C."/>
            <person name="Griffiths-Jones S."/>
            <person name="Grocock R."/>
            <person name="Hammond S."/>
            <person name="Harrison E.S.I."/>
            <person name="Hart E."/>
            <person name="Haugen E."/>
            <person name="Heath P.D."/>
            <person name="Holmes S."/>
            <person name="Holt K."/>
            <person name="Howden P.J."/>
            <person name="Hunt A.R."/>
            <person name="Hunt S.E."/>
            <person name="Hunter G."/>
            <person name="Isherwood J."/>
            <person name="James R."/>
            <person name="Johnson C."/>
            <person name="Johnson D."/>
            <person name="Joy A."/>
            <person name="Kay M."/>
            <person name="Kershaw J.K."/>
            <person name="Kibukawa M."/>
            <person name="Kimberley A.M."/>
            <person name="King A."/>
            <person name="Knights A.J."/>
            <person name="Lad H."/>
            <person name="Laird G."/>
            <person name="Lawlor S."/>
            <person name="Leongamornlert D.A."/>
            <person name="Lloyd D.M."/>
            <person name="Loveland J."/>
            <person name="Lovell J."/>
            <person name="Lush M.J."/>
            <person name="Lyne R."/>
            <person name="Martin S."/>
            <person name="Mashreghi-Mohammadi M."/>
            <person name="Matthews L."/>
            <person name="Matthews N.S.W."/>
            <person name="McLaren S."/>
            <person name="Milne S."/>
            <person name="Mistry S."/>
            <person name="Moore M.J.F."/>
            <person name="Nickerson T."/>
            <person name="O'Dell C.N."/>
            <person name="Oliver K."/>
            <person name="Palmeiri A."/>
            <person name="Palmer S.A."/>
            <person name="Parker A."/>
            <person name="Patel D."/>
            <person name="Pearce A.V."/>
            <person name="Peck A.I."/>
            <person name="Pelan S."/>
            <person name="Phelps K."/>
            <person name="Phillimore B.J."/>
            <person name="Plumb R."/>
            <person name="Rajan J."/>
            <person name="Raymond C."/>
            <person name="Rouse G."/>
            <person name="Saenphimmachak C."/>
            <person name="Sehra H.K."/>
            <person name="Sheridan E."/>
            <person name="Shownkeen R."/>
            <person name="Sims S."/>
            <person name="Skuce C.D."/>
            <person name="Smith M."/>
            <person name="Steward C."/>
            <person name="Subramanian S."/>
            <person name="Sycamore N."/>
            <person name="Tracey A."/>
            <person name="Tromans A."/>
            <person name="Van Helmond Z."/>
            <person name="Wall M."/>
            <person name="Wallis J.M."/>
            <person name="White S."/>
            <person name="Whitehead S.L."/>
            <person name="Wilkinson J.E."/>
            <person name="Willey D.L."/>
            <person name="Williams H."/>
            <person name="Wilming L."/>
            <person name="Wray P.W."/>
            <person name="Wu Z."/>
            <person name="Coulson A."/>
            <person name="Vaudin M."/>
            <person name="Sulston J.E."/>
            <person name="Durbin R.M."/>
            <person name="Hubbard T."/>
            <person name="Wooster R."/>
            <person name="Dunham I."/>
            <person name="Carter N.P."/>
            <person name="McVean G."/>
            <person name="Ross M.T."/>
            <person name="Harrow J."/>
            <person name="Olson M.V."/>
            <person name="Beck S."/>
            <person name="Rogers J."/>
            <person name="Bentley D.R."/>
        </authorList>
    </citation>
    <scope>NUCLEOTIDE SEQUENCE [LARGE SCALE GENOMIC DNA]</scope>
</reference>
<reference key="6">
    <citation type="journal article" date="2004" name="Genome Res.">
        <title>The status, quality, and expansion of the NIH full-length cDNA project: the Mammalian Gene Collection (MGC).</title>
        <authorList>
            <consortium name="The MGC Project Team"/>
        </authorList>
    </citation>
    <scope>NUCLEOTIDE SEQUENCE [LARGE SCALE MRNA] (ISOFORMS 3 AND 4)</scope>
    <source>
        <tissue>Lung</tissue>
        <tissue>Uterus</tissue>
    </source>
</reference>
<reference key="7">
    <citation type="journal article" date="2006" name="EMBO J.">
        <title>A novel proteasome-interacting protein recruits the deubiquitinating enzyme UCH37 to 26S proteasomes.</title>
        <authorList>
            <person name="Hamazaki J."/>
            <person name="Iemura S."/>
            <person name="Natsume T."/>
            <person name="Yashiroda H."/>
            <person name="Tanaka K."/>
            <person name="Murata S."/>
        </authorList>
    </citation>
    <scope>INTERACTION WITH ADRM1</scope>
    <scope>IDENTIFICATION BY MASS SPECTROMETRY</scope>
</reference>
<reference key="8">
    <citation type="journal article" date="2006" name="EMBO J.">
        <title>hRpn13/ADRM1/GP110 is a novel proteasome subunit that binds the deubiquitinating enzyme, UCH37.</title>
        <authorList>
            <person name="Qiu X.-B."/>
            <person name="Ouyang S.-Y."/>
            <person name="Li C.-J."/>
            <person name="Miao S."/>
            <person name="Wang L."/>
            <person name="Goldberg A.L."/>
        </authorList>
    </citation>
    <scope>INTERACTION WITH ADRM1</scope>
    <scope>ACTIVITY REGULATION</scope>
    <scope>IDENTIFICATION BY MASS SPECTROMETRY</scope>
</reference>
<reference key="9">
    <citation type="journal article" date="2007" name="Biochemistry">
        <title>Mass spectrometric characterization of the affinity-purified human 26S proteasome complex.</title>
        <authorList>
            <person name="Wang X."/>
            <person name="Chen C.-F."/>
            <person name="Baker P.R."/>
            <person name="Chen P.-L."/>
            <person name="Kaiser P."/>
            <person name="Huang L."/>
        </authorList>
    </citation>
    <scope>IDENTIFICATION BY MASS SPECTROMETRY [LARGE SCALE ANALYSIS]</scope>
    <source>
        <tissue>Embryonic kidney</tissue>
    </source>
</reference>
<reference key="10">
    <citation type="journal article" date="2008" name="Mol. Cell">
        <title>Distinct modes of regulation of the Uch37 deubiquitinating enzyme in the proteasome and in the Ino80 chromatin-remodeling complex.</title>
        <authorList>
            <person name="Yao T."/>
            <person name="Song L."/>
            <person name="Jin J."/>
            <person name="Cai Y."/>
            <person name="Takahashi H."/>
            <person name="Swanson S.K."/>
            <person name="Washburn M.P."/>
            <person name="Florens L."/>
            <person name="Conaway R.C."/>
            <person name="Cohen R.E."/>
            <person name="Conaway J.W."/>
        </authorList>
    </citation>
    <scope>FUNCTION</scope>
    <scope>SUBCELLULAR LOCATION</scope>
    <scope>SUBUNIT</scope>
    <scope>IDENTIFICATION IN THE INO80 COMPLEX</scope>
    <scope>INTERACTION WITH NFRKB AND ADRM1</scope>
    <scope>ACTIVITY REGULATION</scope>
</reference>
<reference key="11">
    <citation type="journal article" date="2009" name="Science">
        <title>Lysine acetylation targets protein complexes and co-regulates major cellular functions.</title>
        <authorList>
            <person name="Choudhary C."/>
            <person name="Kumar C."/>
            <person name="Gnad F."/>
            <person name="Nielsen M.L."/>
            <person name="Rehman M."/>
            <person name="Walther T.C."/>
            <person name="Olsen J.V."/>
            <person name="Mann M."/>
        </authorList>
    </citation>
    <scope>ACETYLATION [LARGE SCALE ANALYSIS] AT LYS-158</scope>
    <scope>IDENTIFICATION BY MASS SPECTROMETRY [LARGE SCALE ANALYSIS]</scope>
</reference>
<reference key="12">
    <citation type="journal article" date="2011" name="BMC Syst. Biol.">
        <title>Initial characterization of the human central proteome.</title>
        <authorList>
            <person name="Burkard T.R."/>
            <person name="Planyavsky M."/>
            <person name="Kaupe I."/>
            <person name="Breitwieser F.P."/>
            <person name="Buerckstuemmer T."/>
            <person name="Bennett K.L."/>
            <person name="Superti-Furga G."/>
            <person name="Colinge J."/>
        </authorList>
    </citation>
    <scope>IDENTIFICATION BY MASS SPECTROMETRY [LARGE SCALE ANALYSIS]</scope>
</reference>
<reference key="13">
    <citation type="journal article" date="2011" name="J. Biol. Chem.">
        <title>Subunit organization of the human INO80 chromatin remodeling complex: An evolutionarily conserved core complex catalyzes ATP-dependent nucleosome remodeling.</title>
        <authorList>
            <person name="Chen L."/>
            <person name="Cai Y."/>
            <person name="Jin J."/>
            <person name="Florens L."/>
            <person name="Swanson S.K."/>
            <person name="Washburn M.P."/>
            <person name="Conaway J.W."/>
            <person name="Conaway R.C."/>
        </authorList>
    </citation>
    <scope>IDENTIFICATION IN THE INO80 COMPLEX</scope>
</reference>
<reference key="14">
    <citation type="journal article" date="2014" name="J. Proteomics">
        <title>An enzyme assisted RP-RPLC approach for in-depth analysis of human liver phosphoproteome.</title>
        <authorList>
            <person name="Bian Y."/>
            <person name="Song C."/>
            <person name="Cheng K."/>
            <person name="Dong M."/>
            <person name="Wang F."/>
            <person name="Huang J."/>
            <person name="Sun D."/>
            <person name="Wang L."/>
            <person name="Ye M."/>
            <person name="Zou H."/>
        </authorList>
    </citation>
    <scope>IDENTIFICATION BY MASS SPECTROMETRY [LARGE SCALE ANALYSIS]</scope>
    <source>
        <tissue>Liver</tissue>
    </source>
</reference>
<reference key="15">
    <citation type="journal article" date="2009" name="Biochem. Biophys. Res. Commun.">
        <title>Crystal structure of the de-ubiquitinating enzyme UCH37 (human UCH-L5) catalytic domain.</title>
        <authorList>
            <person name="Nishio K."/>
            <person name="Kim S.W."/>
            <person name="Kawai K."/>
            <person name="Mizushima T."/>
            <person name="Yamane T."/>
            <person name="Hamazaki J."/>
            <person name="Murata S."/>
            <person name="Tanaka K."/>
            <person name="Morimoto Y."/>
        </authorList>
    </citation>
    <scope>X-RAY CRYSTALLOGRAPHY (2.2 ANGSTROMS) OF 1-228</scope>
</reference>
<reference key="16">
    <citation type="submission" date="2009-08" db="PDB data bank">
        <title>Crystal structure of UCH37.</title>
        <authorList>
            <consortium name="Center for eukaryotic structural genomics (CESG)"/>
        </authorList>
    </citation>
    <scope>X-RAY CRYSTALLOGRAPHY (2.95 ANGSTROMS) OF 2-328</scope>
</reference>
<gene>
    <name type="primary">UCHL5</name>
    <name type="synonym">UCH37</name>
    <name type="ORF">AD-019</name>
    <name type="ORF">CGI-70</name>
</gene>
<evidence type="ECO:0000250" key="1">
    <source>
        <dbReference type="UniProtKB" id="Q9WUP7"/>
    </source>
</evidence>
<evidence type="ECO:0000255" key="2">
    <source>
        <dbReference type="PROSITE-ProRule" id="PRU01393"/>
    </source>
</evidence>
<evidence type="ECO:0000255" key="3">
    <source>
        <dbReference type="PROSITE-ProRule" id="PRU01394"/>
    </source>
</evidence>
<evidence type="ECO:0000269" key="4">
    <source>
    </source>
</evidence>
<evidence type="ECO:0000269" key="5">
    <source>
    </source>
</evidence>
<evidence type="ECO:0000269" key="6">
    <source>
    </source>
</evidence>
<evidence type="ECO:0000269" key="7">
    <source>
    </source>
</evidence>
<evidence type="ECO:0000269" key="8">
    <source>
    </source>
</evidence>
<evidence type="ECO:0000269" key="9">
    <source>
    </source>
</evidence>
<evidence type="ECO:0000269" key="10">
    <source>
    </source>
</evidence>
<evidence type="ECO:0000303" key="11">
    <source>
    </source>
</evidence>
<evidence type="ECO:0000303" key="12">
    <source>
    </source>
</evidence>
<evidence type="ECO:0000303" key="13">
    <source>
    </source>
</evidence>
<evidence type="ECO:0000303" key="14">
    <source ref="4"/>
</evidence>
<evidence type="ECO:0000305" key="15"/>
<evidence type="ECO:0007744" key="16">
    <source>
    </source>
</evidence>
<evidence type="ECO:0007829" key="17">
    <source>
        <dbReference type="PDB" id="3RII"/>
    </source>
</evidence>
<evidence type="ECO:0007829" key="18">
    <source>
        <dbReference type="PDB" id="4UEL"/>
    </source>
</evidence>